<keyword id="KW-0030">Aminoacyl-tRNA synthetase</keyword>
<keyword id="KW-0067">ATP-binding</keyword>
<keyword id="KW-0963">Cytoplasm</keyword>
<keyword id="KW-0436">Ligase</keyword>
<keyword id="KW-0547">Nucleotide-binding</keyword>
<keyword id="KW-0648">Protein biosynthesis</keyword>
<evidence type="ECO:0000255" key="1">
    <source>
        <dbReference type="HAMAP-Rule" id="MF_00254"/>
    </source>
</evidence>
<reference key="1">
    <citation type="submission" date="2007-11" db="EMBL/GenBank/DDBJ databases">
        <title>Complete sequence of Petroga mobilis SJ95.</title>
        <authorList>
            <consortium name="US DOE Joint Genome Institute"/>
            <person name="Copeland A."/>
            <person name="Lucas S."/>
            <person name="Lapidus A."/>
            <person name="Barry K."/>
            <person name="Glavina del Rio T."/>
            <person name="Dalin E."/>
            <person name="Tice H."/>
            <person name="Pitluck S."/>
            <person name="Meincke L."/>
            <person name="Brettin T."/>
            <person name="Bruce D."/>
            <person name="Detter J.C."/>
            <person name="Han C."/>
            <person name="Kuske C.R."/>
            <person name="Schmutz J."/>
            <person name="Larimer F."/>
            <person name="Land M."/>
            <person name="Hauser L."/>
            <person name="Kyrpides N."/>
            <person name="Mikhailova N."/>
            <person name="Noll K."/>
            <person name="Richardson P."/>
        </authorList>
    </citation>
    <scope>NUCLEOTIDE SEQUENCE [LARGE SCALE GENOMIC DNA]</scope>
    <source>
        <strain>DSM 10674 / SJ95</strain>
    </source>
</reference>
<protein>
    <recommendedName>
        <fullName evidence="1">Glycine--tRNA ligase alpha subunit</fullName>
        <ecNumber evidence="1">6.1.1.14</ecNumber>
    </recommendedName>
    <alternativeName>
        <fullName evidence="1">Glycyl-tRNA synthetase alpha subunit</fullName>
        <shortName evidence="1">GlyRS</shortName>
    </alternativeName>
</protein>
<organism>
    <name type="scientific">Petrotoga mobilis (strain DSM 10674 / SJ95)</name>
    <dbReference type="NCBI Taxonomy" id="403833"/>
    <lineage>
        <taxon>Bacteria</taxon>
        <taxon>Thermotogati</taxon>
        <taxon>Thermotogota</taxon>
        <taxon>Thermotogae</taxon>
        <taxon>Petrotogales</taxon>
        <taxon>Petrotogaceae</taxon>
        <taxon>Petrotoga</taxon>
    </lineage>
</organism>
<accession>A9BG54</accession>
<dbReference type="EC" id="6.1.1.14" evidence="1"/>
<dbReference type="EMBL" id="CP000879">
    <property type="protein sequence ID" value="ABX31810.1"/>
    <property type="molecule type" value="Genomic_DNA"/>
</dbReference>
<dbReference type="RefSeq" id="WP_012208911.1">
    <property type="nucleotide sequence ID" value="NC_010003.1"/>
</dbReference>
<dbReference type="SMR" id="A9BG54"/>
<dbReference type="STRING" id="403833.Pmob_1091"/>
<dbReference type="KEGG" id="pmo:Pmob_1091"/>
<dbReference type="eggNOG" id="COG0752">
    <property type="taxonomic scope" value="Bacteria"/>
</dbReference>
<dbReference type="HOGENOM" id="CLU_057066_1_0_0"/>
<dbReference type="OrthoDB" id="9802183at2"/>
<dbReference type="Proteomes" id="UP000000789">
    <property type="component" value="Chromosome"/>
</dbReference>
<dbReference type="GO" id="GO:0005829">
    <property type="term" value="C:cytosol"/>
    <property type="evidence" value="ECO:0007669"/>
    <property type="project" value="TreeGrafter"/>
</dbReference>
<dbReference type="GO" id="GO:0005524">
    <property type="term" value="F:ATP binding"/>
    <property type="evidence" value="ECO:0007669"/>
    <property type="project" value="UniProtKB-UniRule"/>
</dbReference>
<dbReference type="GO" id="GO:0004820">
    <property type="term" value="F:glycine-tRNA ligase activity"/>
    <property type="evidence" value="ECO:0007669"/>
    <property type="project" value="UniProtKB-UniRule"/>
</dbReference>
<dbReference type="GO" id="GO:0006426">
    <property type="term" value="P:glycyl-tRNA aminoacylation"/>
    <property type="evidence" value="ECO:0007669"/>
    <property type="project" value="UniProtKB-UniRule"/>
</dbReference>
<dbReference type="FunFam" id="3.30.930.10:FF:000006">
    <property type="entry name" value="Glycine--tRNA ligase alpha subunit"/>
    <property type="match status" value="1"/>
</dbReference>
<dbReference type="Gene3D" id="3.30.930.10">
    <property type="entry name" value="Bira Bifunctional Protein, Domain 2"/>
    <property type="match status" value="1"/>
</dbReference>
<dbReference type="Gene3D" id="1.20.58.180">
    <property type="entry name" value="Class II aaRS and biotin synthetases, domain 2"/>
    <property type="match status" value="1"/>
</dbReference>
<dbReference type="HAMAP" id="MF_00254">
    <property type="entry name" value="Gly_tRNA_synth_alpha"/>
    <property type="match status" value="1"/>
</dbReference>
<dbReference type="InterPro" id="IPR045864">
    <property type="entry name" value="aa-tRNA-synth_II/BPL/LPL"/>
</dbReference>
<dbReference type="InterPro" id="IPR006194">
    <property type="entry name" value="Gly-tRNA-synth_heterodimer"/>
</dbReference>
<dbReference type="InterPro" id="IPR002310">
    <property type="entry name" value="Gly-tRNA_ligase_asu"/>
</dbReference>
<dbReference type="NCBIfam" id="TIGR00388">
    <property type="entry name" value="glyQ"/>
    <property type="match status" value="1"/>
</dbReference>
<dbReference type="NCBIfam" id="NF006827">
    <property type="entry name" value="PRK09348.1"/>
    <property type="match status" value="1"/>
</dbReference>
<dbReference type="PANTHER" id="PTHR30075:SF2">
    <property type="entry name" value="GLYCINE--TRNA LIGASE, CHLOROPLASTIC_MITOCHONDRIAL 2"/>
    <property type="match status" value="1"/>
</dbReference>
<dbReference type="PANTHER" id="PTHR30075">
    <property type="entry name" value="GLYCYL-TRNA SYNTHETASE"/>
    <property type="match status" value="1"/>
</dbReference>
<dbReference type="Pfam" id="PF02091">
    <property type="entry name" value="tRNA-synt_2e"/>
    <property type="match status" value="1"/>
</dbReference>
<dbReference type="PRINTS" id="PR01044">
    <property type="entry name" value="TRNASYNTHGA"/>
</dbReference>
<dbReference type="SUPFAM" id="SSF55681">
    <property type="entry name" value="Class II aaRS and biotin synthetases"/>
    <property type="match status" value="1"/>
</dbReference>
<dbReference type="PROSITE" id="PS50861">
    <property type="entry name" value="AA_TRNA_LIGASE_II_GLYAB"/>
    <property type="match status" value="1"/>
</dbReference>
<gene>
    <name evidence="1" type="primary">glyQ</name>
    <name type="ordered locus">Pmob_1091</name>
</gene>
<sequence length="287" mass="33984">MYIQDVIMNLEKFWSDFGCVIDQPYDIEMGAGTYSPATFFRSFGANEWRVAYTQPCRRPTDGRYGENPNRMQRFYQYQVVLKPSPKDVQDLYIRSLESLGISPKEHDIRFVEDNWESPTLGAWGVGWEVWLDGMEITQFTYFQQMGGIPLTYIPVELTYGIERIAMYLQNIDNVYETKWNKNVKYKDIYKENERQFSYYNFEEADIDMLKTLYNMYKKEFQRLIAKQLYLPAYDYLAKSAHVFNLMDARNAIGVNERHQYILDIRNMAKSCAKLYIDSSNAEVIDVE</sequence>
<name>SYGA_PETMO</name>
<feature type="chain" id="PRO_1000101213" description="Glycine--tRNA ligase alpha subunit">
    <location>
        <begin position="1"/>
        <end position="287"/>
    </location>
</feature>
<proteinExistence type="inferred from homology"/>
<comment type="catalytic activity">
    <reaction evidence="1">
        <text>tRNA(Gly) + glycine + ATP = glycyl-tRNA(Gly) + AMP + diphosphate</text>
        <dbReference type="Rhea" id="RHEA:16013"/>
        <dbReference type="Rhea" id="RHEA-COMP:9664"/>
        <dbReference type="Rhea" id="RHEA-COMP:9683"/>
        <dbReference type="ChEBI" id="CHEBI:30616"/>
        <dbReference type="ChEBI" id="CHEBI:33019"/>
        <dbReference type="ChEBI" id="CHEBI:57305"/>
        <dbReference type="ChEBI" id="CHEBI:78442"/>
        <dbReference type="ChEBI" id="CHEBI:78522"/>
        <dbReference type="ChEBI" id="CHEBI:456215"/>
        <dbReference type="EC" id="6.1.1.14"/>
    </reaction>
</comment>
<comment type="subunit">
    <text evidence="1">Tetramer of two alpha and two beta subunits.</text>
</comment>
<comment type="subcellular location">
    <subcellularLocation>
        <location evidence="1">Cytoplasm</location>
    </subcellularLocation>
</comment>
<comment type="similarity">
    <text evidence="1">Belongs to the class-II aminoacyl-tRNA synthetase family.</text>
</comment>